<name>RIP1_MYCS2</name>
<dbReference type="EC" id="3.4.24.-"/>
<dbReference type="EMBL" id="CP000480">
    <property type="protein sequence ID" value="ABK74716.1"/>
    <property type="molecule type" value="Genomic_DNA"/>
</dbReference>
<dbReference type="EMBL" id="CP001663">
    <property type="protein sequence ID" value="AFP38985.1"/>
    <property type="molecule type" value="Genomic_DNA"/>
</dbReference>
<dbReference type="RefSeq" id="WP_003893934.1">
    <property type="nucleotide sequence ID" value="NZ_SIJM01000029.1"/>
</dbReference>
<dbReference type="RefSeq" id="YP_886916.1">
    <property type="nucleotide sequence ID" value="NC_008596.1"/>
</dbReference>
<dbReference type="SMR" id="A0QVH8"/>
<dbReference type="STRING" id="246196.MSMEG_2579"/>
<dbReference type="PaxDb" id="246196-MSMEI_2517"/>
<dbReference type="KEGG" id="msb:LJ00_12835"/>
<dbReference type="KEGG" id="msg:MSMEI_2517"/>
<dbReference type="KEGG" id="msm:MSMEG_2579"/>
<dbReference type="PATRIC" id="fig|246196.19.peg.2545"/>
<dbReference type="eggNOG" id="COG0750">
    <property type="taxonomic scope" value="Bacteria"/>
</dbReference>
<dbReference type="OrthoDB" id="9782003at2"/>
<dbReference type="Proteomes" id="UP000000757">
    <property type="component" value="Chromosome"/>
</dbReference>
<dbReference type="Proteomes" id="UP000006158">
    <property type="component" value="Chromosome"/>
</dbReference>
<dbReference type="GO" id="GO:0005886">
    <property type="term" value="C:plasma membrane"/>
    <property type="evidence" value="ECO:0007669"/>
    <property type="project" value="UniProtKB-SubCell"/>
</dbReference>
<dbReference type="GO" id="GO:0046872">
    <property type="term" value="F:metal ion binding"/>
    <property type="evidence" value="ECO:0007669"/>
    <property type="project" value="UniProtKB-KW"/>
</dbReference>
<dbReference type="GO" id="GO:0004222">
    <property type="term" value="F:metalloendopeptidase activity"/>
    <property type="evidence" value="ECO:0007669"/>
    <property type="project" value="InterPro"/>
</dbReference>
<dbReference type="GO" id="GO:0006508">
    <property type="term" value="P:proteolysis"/>
    <property type="evidence" value="ECO:0007669"/>
    <property type="project" value="UniProtKB-KW"/>
</dbReference>
<dbReference type="CDD" id="cd06163">
    <property type="entry name" value="S2P-M50_PDZ_RseP-like"/>
    <property type="match status" value="1"/>
</dbReference>
<dbReference type="Gene3D" id="2.30.42.10">
    <property type="match status" value="1"/>
</dbReference>
<dbReference type="InterPro" id="IPR041489">
    <property type="entry name" value="PDZ_6"/>
</dbReference>
<dbReference type="InterPro" id="IPR036034">
    <property type="entry name" value="PDZ_sf"/>
</dbReference>
<dbReference type="InterPro" id="IPR004387">
    <property type="entry name" value="Pept_M50_Zn"/>
</dbReference>
<dbReference type="InterPro" id="IPR008915">
    <property type="entry name" value="Peptidase_M50"/>
</dbReference>
<dbReference type="PANTHER" id="PTHR42837:SF2">
    <property type="entry name" value="MEMBRANE METALLOPROTEASE ARASP2, CHLOROPLASTIC-RELATED"/>
    <property type="match status" value="1"/>
</dbReference>
<dbReference type="PANTHER" id="PTHR42837">
    <property type="entry name" value="REGULATOR OF SIGMA-E PROTEASE RSEP"/>
    <property type="match status" value="1"/>
</dbReference>
<dbReference type="Pfam" id="PF17820">
    <property type="entry name" value="PDZ_6"/>
    <property type="match status" value="1"/>
</dbReference>
<dbReference type="Pfam" id="PF02163">
    <property type="entry name" value="Peptidase_M50"/>
    <property type="match status" value="1"/>
</dbReference>
<dbReference type="SUPFAM" id="SSF50156">
    <property type="entry name" value="PDZ domain-like"/>
    <property type="match status" value="1"/>
</dbReference>
<organism>
    <name type="scientific">Mycolicibacterium smegmatis (strain ATCC 700084 / mc(2)155)</name>
    <name type="common">Mycobacterium smegmatis</name>
    <dbReference type="NCBI Taxonomy" id="246196"/>
    <lineage>
        <taxon>Bacteria</taxon>
        <taxon>Bacillati</taxon>
        <taxon>Actinomycetota</taxon>
        <taxon>Actinomycetes</taxon>
        <taxon>Mycobacteriales</taxon>
        <taxon>Mycobacteriaceae</taxon>
        <taxon>Mycolicibacterium</taxon>
    </lineage>
</organism>
<feature type="chain" id="PRO_0000422676" description="Zinc metalloprotease Rip1">
    <location>
        <begin position="1"/>
        <end position="406"/>
    </location>
</feature>
<feature type="transmembrane region" description="Helical" evidence="2">
    <location>
        <begin position="1"/>
        <end position="21"/>
    </location>
</feature>
<feature type="transmembrane region" description="Helical" evidence="2">
    <location>
        <begin position="108"/>
        <end position="128"/>
    </location>
</feature>
<feature type="transmembrane region" description="Helical" evidence="2">
    <location>
        <begin position="327"/>
        <end position="349"/>
    </location>
</feature>
<feature type="transmembrane region" description="Helical" evidence="2">
    <location>
        <begin position="375"/>
        <end position="395"/>
    </location>
</feature>
<feature type="domain" description="PDZ">
    <location>
        <begin position="125"/>
        <end position="209"/>
    </location>
</feature>
<feature type="active site" evidence="2">
    <location>
        <position position="22"/>
    </location>
</feature>
<feature type="binding site" evidence="1">
    <location>
        <position position="21"/>
    </location>
    <ligand>
        <name>Zn(2+)</name>
        <dbReference type="ChEBI" id="CHEBI:29105"/>
        <note>catalytic</note>
    </ligand>
</feature>
<feature type="binding site" evidence="1">
    <location>
        <position position="25"/>
    </location>
    <ligand>
        <name>Zn(2+)</name>
        <dbReference type="ChEBI" id="CHEBI:29105"/>
        <note>catalytic</note>
    </ligand>
</feature>
<feature type="binding site" evidence="1">
    <location>
        <position position="206"/>
    </location>
    <ligand>
        <name>Zn(2+)</name>
        <dbReference type="ChEBI" id="CHEBI:29105"/>
        <note>catalytic</note>
    </ligand>
</feature>
<comment type="function">
    <text>A probable intramembrane site-2 protease (S2P) that cleaves type-2 transmembrane proteins within their membrane-spanning domains. Degrades PbpB (PBP3, FtsI) under conditions of oxidatives stress; degradation is inhibited by Wag31-PbpB interaction. Also cleaves anti-sigma factors RskA, RslA and RslM. Site-1 proteases have not yet been identified in this organism.</text>
</comment>
<comment type="function">
    <text>Regulated intramembrane proteolysis (RIP) occurs when an extracytoplasmic signal (possibly oxidative stress) triggers a concerted proteolytic cascade to transmit information and elicit cellular responses. The membrane-spanning regulatory substrate protein (includes anti-sigma factors RskA, RslA, RsmA, and PbpB) is first cut extracytoplasmically (site-1 protease, S1P), then within the membrane itself (site-2 protease, S2P, this entry), while cytoplasmic proteases finish degrading the regulatory protein, liberating the effector protein (ECF sigma factors SigK, SigL and SigM).</text>
</comment>
<comment type="cofactor">
    <cofactor evidence="1">
        <name>Zn(2+)</name>
        <dbReference type="ChEBI" id="CHEBI:29105"/>
    </cofactor>
</comment>
<comment type="activity regulation">
    <text evidence="3">Proteolysis is inhibited by Wag31; when Wag31 is non-functional oxidative stress increases proteolysis.</text>
</comment>
<comment type="subcellular location">
    <subcellularLocation>
        <location evidence="5">Cell membrane</location>
        <topology evidence="5">Multi-pass membrane protein</topology>
    </subcellularLocation>
</comment>
<comment type="disruption phenotype">
    <text evidence="3 4">Not essential. No degradation of PbpB (PBP3, FtsI) in the presence of mutant Wag31 upon H(2)O(2) exposure (PubMed:19496931). Altered processing of anti-sigma factors RskA, RslA and RslM (PubMed:20545848).</text>
</comment>
<comment type="similarity">
    <text evidence="5">Belongs to the peptidase M50B family.</text>
</comment>
<keyword id="KW-1003">Cell membrane</keyword>
<keyword id="KW-0378">Hydrolase</keyword>
<keyword id="KW-0472">Membrane</keyword>
<keyword id="KW-0479">Metal-binding</keyword>
<keyword id="KW-0482">Metalloprotease</keyword>
<keyword id="KW-0645">Protease</keyword>
<keyword id="KW-1185">Reference proteome</keyword>
<keyword id="KW-0812">Transmembrane</keyword>
<keyword id="KW-1133">Transmembrane helix</keyword>
<keyword id="KW-0862">Zinc</keyword>
<proteinExistence type="inferred from homology"/>
<accession>A0QVH8</accession>
<evidence type="ECO:0000250" key="1"/>
<evidence type="ECO:0000255" key="2"/>
<evidence type="ECO:0000269" key="3">
    <source>
    </source>
</evidence>
<evidence type="ECO:0000269" key="4">
    <source>
    </source>
</evidence>
<evidence type="ECO:0000305" key="5"/>
<protein>
    <recommendedName>
        <fullName>Zinc metalloprotease Rip1</fullName>
        <ecNumber>3.4.24.-</ecNumber>
    </recommendedName>
    <alternativeName>
        <fullName>Regulator of sigma KLM proteases</fullName>
    </alternativeName>
    <alternativeName>
        <fullName>S2P endopeptidase</fullName>
    </alternativeName>
    <alternativeName>
        <fullName>Site-2-type intramembrane protease</fullName>
    </alternativeName>
    <alternativeName>
        <fullName>site-2 protease Rip1</fullName>
        <shortName>S2P protease Rip1</shortName>
    </alternativeName>
</protein>
<gene>
    <name type="primary">rip1</name>
    <name type="ordered locus">MSMEG_2579</name>
    <name type="ordered locus">MSMEI_2517</name>
</gene>
<sequence>MMFGIGIVLFALAILVSVALHECGHMWVARATGMKVRRYFVGFGPTLWSTRRANRLGSTEYGIKAIPLGGFCDIAGMTSVDEIAPEDRPYAMYKQKVWKRVAVLFAGPAMNFVIGLVLIYGIAIVWGLPNLHQPTTAIVGETGCVAPQITLEEMGECTGPGPAALAGIQAGDEIVKVGDTEVKDFAGMAAAVRKLDGPTRIEFKRDGRVMDTVVDVTPTQRFTSADASAPSTVGAIGVSAVPVQPPAQYNPITAVPATFAFTGDLAVELGKSLAKIPTKIGALVEAIGGGERDKETPISVVGASIIGGETVDAGLWVAFWFFLAQLNFVLGAINLVPLLPFDGGHIAVATYEKIRNMIRSARGMVAAGPVNYLKLMPATYVVLAVVAGYMLLTVTADLVNPLSIFQ</sequence>
<reference key="1">
    <citation type="submission" date="2006-10" db="EMBL/GenBank/DDBJ databases">
        <authorList>
            <person name="Fleischmann R.D."/>
            <person name="Dodson R.J."/>
            <person name="Haft D.H."/>
            <person name="Merkel J.S."/>
            <person name="Nelson W.C."/>
            <person name="Fraser C.M."/>
        </authorList>
    </citation>
    <scope>NUCLEOTIDE SEQUENCE [LARGE SCALE GENOMIC DNA]</scope>
    <source>
        <strain>ATCC 700084 / mc(2)155</strain>
    </source>
</reference>
<reference key="2">
    <citation type="journal article" date="2007" name="Genome Biol.">
        <title>Interrupted coding sequences in Mycobacterium smegmatis: authentic mutations or sequencing errors?</title>
        <authorList>
            <person name="Deshayes C."/>
            <person name="Perrodou E."/>
            <person name="Gallien S."/>
            <person name="Euphrasie D."/>
            <person name="Schaeffer C."/>
            <person name="Van-Dorsselaer A."/>
            <person name="Poch O."/>
            <person name="Lecompte O."/>
            <person name="Reyrat J.-M."/>
        </authorList>
    </citation>
    <scope>NUCLEOTIDE SEQUENCE [LARGE SCALE GENOMIC DNA]</scope>
    <source>
        <strain>ATCC 700084 / mc(2)155</strain>
    </source>
</reference>
<reference key="3">
    <citation type="journal article" date="2009" name="Genome Res.">
        <title>Ortho-proteogenomics: multiple proteomes investigation through orthology and a new MS-based protocol.</title>
        <authorList>
            <person name="Gallien S."/>
            <person name="Perrodou E."/>
            <person name="Carapito C."/>
            <person name="Deshayes C."/>
            <person name="Reyrat J.-M."/>
            <person name="Van Dorsselaer A."/>
            <person name="Poch O."/>
            <person name="Schaeffer C."/>
            <person name="Lecompte O."/>
        </authorList>
    </citation>
    <scope>NUCLEOTIDE SEQUENCE [LARGE SCALE GENOMIC DNA]</scope>
    <source>
        <strain>ATCC 700084 / mc(2)155</strain>
    </source>
</reference>
<reference key="4">
    <citation type="journal article" date="2009" name="Mol. Microbiol.">
        <title>Novel role of Wag31 in protection of mycobacteria under oxidative stress.</title>
        <authorList>
            <person name="Mukherjee P."/>
            <person name="Sureka K."/>
            <person name="Datta P."/>
            <person name="Hossain T."/>
            <person name="Barik S."/>
            <person name="Das K.P."/>
            <person name="Kundu M."/>
            <person name="Basu J."/>
        </authorList>
    </citation>
    <scope>FUNCTION</scope>
    <scope>ACTIVITY REGULATION</scope>
    <scope>SUBSTRATE</scope>
    <scope>DISRUPTION PHENOTYPE</scope>
    <source>
        <strain>ATCC 700084 / mc(2)155</strain>
    </source>
</reference>
<reference key="5">
    <citation type="journal article" date="2010" name="Mol. Microbiol.">
        <title>M. tuberculosis intramembrane protease Rip1 controls transcription through three anti-sigma factor substrates.</title>
        <authorList>
            <person name="Sklar J.G."/>
            <person name="Makinoshima H."/>
            <person name="Schneider J.S."/>
            <person name="Glickman M.S."/>
        </authorList>
    </citation>
    <scope>FUNCTION</scope>
    <scope>SUBSTRATES</scope>
    <scope>DISRUPTION PHENOTYPE</scope>
    <source>
        <strain>ATCC 700084 / mc(2)155</strain>
    </source>
</reference>